<feature type="chain" id="PRO_0000408134" description="U3 small nucleolar RNA-associated protein 25">
    <location>
        <begin position="1"/>
        <end position="722"/>
    </location>
</feature>
<feature type="region of interest" description="Disordered" evidence="2">
    <location>
        <begin position="1"/>
        <end position="162"/>
    </location>
</feature>
<feature type="compositionally biased region" description="Basic residues" evidence="2">
    <location>
        <begin position="1"/>
        <end position="11"/>
    </location>
</feature>
<feature type="compositionally biased region" description="Basic residues" evidence="2">
    <location>
        <begin position="24"/>
        <end position="33"/>
    </location>
</feature>
<feature type="compositionally biased region" description="Acidic residues" evidence="2">
    <location>
        <begin position="65"/>
        <end position="79"/>
    </location>
</feature>
<feature type="compositionally biased region" description="Basic and acidic residues" evidence="2">
    <location>
        <begin position="93"/>
        <end position="110"/>
    </location>
</feature>
<feature type="compositionally biased region" description="Acidic residues" evidence="2">
    <location>
        <begin position="111"/>
        <end position="122"/>
    </location>
</feature>
<feature type="compositionally biased region" description="Acidic residues" evidence="2">
    <location>
        <begin position="129"/>
        <end position="144"/>
    </location>
</feature>
<proteinExistence type="inferred from homology"/>
<comment type="function">
    <text evidence="1">DEAD-box RNA helicase-like protein required for pre-18S rRNA processing, specifically at sites A0, A1, and A2.</text>
</comment>
<comment type="subunit">
    <text evidence="1">Component of the ribosomal small subunit (SSU) processome composed of at least 40 protein subunits and snoRNA U3.</text>
</comment>
<comment type="subcellular location">
    <subcellularLocation>
        <location evidence="1">Nucleus</location>
        <location evidence="1">Nucleolus</location>
    </subcellularLocation>
</comment>
<comment type="similarity">
    <text evidence="3">Belongs to the UTP25 family.</text>
</comment>
<name>UTP25_PICST</name>
<reference key="1">
    <citation type="journal article" date="2007" name="Nat. Biotechnol.">
        <title>Genome sequence of the lignocellulose-bioconverting and xylose-fermenting yeast Pichia stipitis.</title>
        <authorList>
            <person name="Jeffries T.W."/>
            <person name="Grigoriev I.V."/>
            <person name="Grimwood J."/>
            <person name="Laplaza J.M."/>
            <person name="Aerts A."/>
            <person name="Salamov A."/>
            <person name="Schmutz J."/>
            <person name="Lindquist E."/>
            <person name="Dehal P."/>
            <person name="Shapiro H."/>
            <person name="Jin Y.-S."/>
            <person name="Passoth V."/>
            <person name="Richardson P.M."/>
        </authorList>
    </citation>
    <scope>NUCLEOTIDE SEQUENCE [LARGE SCALE GENOMIC DNA]</scope>
    <source>
        <strain>ATCC 58785 / CBS 6054 / NBRC 10063 / NRRL Y-11545</strain>
    </source>
</reference>
<evidence type="ECO:0000250" key="1"/>
<evidence type="ECO:0000256" key="2">
    <source>
        <dbReference type="SAM" id="MobiDB-lite"/>
    </source>
</evidence>
<evidence type="ECO:0000305" key="3"/>
<protein>
    <recommendedName>
        <fullName>U3 small nucleolar RNA-associated protein 25</fullName>
        <shortName>U3 snoRNA-associated protein 25</shortName>
    </recommendedName>
    <alternativeName>
        <fullName>U three protein 25</fullName>
    </alternativeName>
</protein>
<accession>A3LXV1</accession>
<keyword id="KW-0539">Nucleus</keyword>
<keyword id="KW-1185">Reference proteome</keyword>
<keyword id="KW-0687">Ribonucleoprotein</keyword>
<keyword id="KW-0690">Ribosome biogenesis</keyword>
<keyword id="KW-0698">rRNA processing</keyword>
<dbReference type="EMBL" id="CP000500">
    <property type="protein sequence ID" value="ABN67527.2"/>
    <property type="molecule type" value="Genomic_DNA"/>
</dbReference>
<dbReference type="RefSeq" id="XP_001385556.2">
    <property type="nucleotide sequence ID" value="XM_001385519.1"/>
</dbReference>
<dbReference type="FunCoup" id="A3LXV1">
    <property type="interactions" value="1284"/>
</dbReference>
<dbReference type="STRING" id="322104.A3LXV1"/>
<dbReference type="GeneID" id="4839837"/>
<dbReference type="KEGG" id="pic:PICST_84833"/>
<dbReference type="eggNOG" id="KOG2340">
    <property type="taxonomic scope" value="Eukaryota"/>
</dbReference>
<dbReference type="HOGENOM" id="CLU_018705_0_1_1"/>
<dbReference type="InParanoid" id="A3LXV1"/>
<dbReference type="OMA" id="QDRGDTF"/>
<dbReference type="OrthoDB" id="10264378at2759"/>
<dbReference type="Proteomes" id="UP000002258">
    <property type="component" value="Chromosome 6"/>
</dbReference>
<dbReference type="GO" id="GO:0005730">
    <property type="term" value="C:nucleolus"/>
    <property type="evidence" value="ECO:0007669"/>
    <property type="project" value="UniProtKB-SubCell"/>
</dbReference>
<dbReference type="GO" id="GO:0032040">
    <property type="term" value="C:small-subunit processome"/>
    <property type="evidence" value="ECO:0007669"/>
    <property type="project" value="EnsemblFungi"/>
</dbReference>
<dbReference type="GO" id="GO:0019843">
    <property type="term" value="F:rRNA binding"/>
    <property type="evidence" value="ECO:0007669"/>
    <property type="project" value="EnsemblFungi"/>
</dbReference>
<dbReference type="GO" id="GO:0034511">
    <property type="term" value="F:U3 snoRNA binding"/>
    <property type="evidence" value="ECO:0007669"/>
    <property type="project" value="EnsemblFungi"/>
</dbReference>
<dbReference type="GO" id="GO:0000462">
    <property type="term" value="P:maturation of SSU-rRNA from tricistronic rRNA transcript (SSU-rRNA, 5.8S rRNA, LSU-rRNA)"/>
    <property type="evidence" value="ECO:0007669"/>
    <property type="project" value="EnsemblFungi"/>
</dbReference>
<dbReference type="Gene3D" id="3.40.50.300">
    <property type="entry name" value="P-loop containing nucleotide triphosphate hydrolases"/>
    <property type="match status" value="1"/>
</dbReference>
<dbReference type="InterPro" id="IPR027417">
    <property type="entry name" value="P-loop_NTPase"/>
</dbReference>
<dbReference type="InterPro" id="IPR010678">
    <property type="entry name" value="UTP25"/>
</dbReference>
<dbReference type="InterPro" id="IPR053939">
    <property type="entry name" value="UTP25_C"/>
</dbReference>
<dbReference type="InterPro" id="IPR053940">
    <property type="entry name" value="UTP25_NTPase-like"/>
</dbReference>
<dbReference type="PANTHER" id="PTHR12933">
    <property type="entry name" value="ORF PROTEIN-RELATED"/>
    <property type="match status" value="1"/>
</dbReference>
<dbReference type="PANTHER" id="PTHR12933:SF0">
    <property type="entry name" value="U3 SMALL NUCLEOLAR RNA-ASSOCIATED PROTEIN 25 HOMOLOG"/>
    <property type="match status" value="1"/>
</dbReference>
<dbReference type="Pfam" id="PF06862">
    <property type="entry name" value="Utp25_C"/>
    <property type="match status" value="1"/>
</dbReference>
<dbReference type="Pfam" id="PF22916">
    <property type="entry name" value="UTP25_NTPase-like"/>
    <property type="match status" value="1"/>
</dbReference>
<sequence length="722" mass="84056">MARQVKRRPHASARPESSSDSKKPKLKHGRHQMRTVTRTARRPGQQDFEEESQDTYDNQQLGEDGQNDEESEDEQEIEQESGKAYEALLTLLKSDHKESKPARKSDKVEENQDEEEEDDEEIAGANVQNEEDQDNEDDNEDDEDSARGLAQDPLEAHFNRVEDSYIDNQERLVIKEREKWTTVEKKTYDNLGYSSLTQSPPGRAISIPSKTKVKISDFFIKKRVLDAFEATYPSDFEKLSPLDLALLEPMMKYQDINFPYKTFSNTSYRKLYALHALNHIYKTRDRIIKNTTKLNNYREALKNGTANLDSQEPEFRDQGFTRPKVLILLPTRNSCYELVELLIKLSGCEQQENKKKFMNQFYAKELPPDTKPLDFRDSFKGNNNDFFCLGLKLTRKSLKLYSSFYSSDIIIASPIGLSMILENPDKKKRQYDFVSSIEVLIVDRANQIEMQNWENVATVMRYVNKIPKDFHDADFSRIRMWSINDQSKLLRQNLIFSEYLTPNINNLITSKSFNIGNKTKFKPIINSNNCIMNSIGLKLKQIFQRFDSPSPVSDPEVRFKFFINTVLPSLMKSSSYSDGIMIFVPSYFDYLRIKHHLKSSTKFNFGSIDEYSSQSKSTKARQQFMAGKINIMLYTERLHYFRRFEISGVKTMLMYGLPSNPVFYKELVRFIGKSVFREQCDLDLAFVKILFSKWDAVTLERVVGNERAHALCNSPNELFEFR</sequence>
<organism>
    <name type="scientific">Scheffersomyces stipitis (strain ATCC 58785 / CBS 6054 / NBRC 10063 / NRRL Y-11545)</name>
    <name type="common">Yeast</name>
    <name type="synonym">Pichia stipitis</name>
    <dbReference type="NCBI Taxonomy" id="322104"/>
    <lineage>
        <taxon>Eukaryota</taxon>
        <taxon>Fungi</taxon>
        <taxon>Dikarya</taxon>
        <taxon>Ascomycota</taxon>
        <taxon>Saccharomycotina</taxon>
        <taxon>Pichiomycetes</taxon>
        <taxon>Debaryomycetaceae</taxon>
        <taxon>Scheffersomyces</taxon>
    </lineage>
</organism>
<gene>
    <name type="primary">UTP25</name>
    <name type="ORF">PICST_84833</name>
</gene>